<name>PSBK_CALFG</name>
<dbReference type="EMBL" id="AJ428413">
    <property type="protein sequence ID" value="CAD28704.1"/>
    <property type="molecule type" value="Genomic_DNA"/>
</dbReference>
<dbReference type="RefSeq" id="NP_862737.1">
    <property type="nucleotide sequence ID" value="NC_004993.1"/>
</dbReference>
<dbReference type="SMR" id="Q7YJY5"/>
<dbReference type="GeneID" id="2598015"/>
<dbReference type="GO" id="GO:0009535">
    <property type="term" value="C:chloroplast thylakoid membrane"/>
    <property type="evidence" value="ECO:0007669"/>
    <property type="project" value="UniProtKB-SubCell"/>
</dbReference>
<dbReference type="GO" id="GO:0009539">
    <property type="term" value="C:photosystem II reaction center"/>
    <property type="evidence" value="ECO:0007669"/>
    <property type="project" value="InterPro"/>
</dbReference>
<dbReference type="GO" id="GO:0015979">
    <property type="term" value="P:photosynthesis"/>
    <property type="evidence" value="ECO:0007669"/>
    <property type="project" value="UniProtKB-UniRule"/>
</dbReference>
<dbReference type="HAMAP" id="MF_00441">
    <property type="entry name" value="PSII_PsbK"/>
    <property type="match status" value="1"/>
</dbReference>
<dbReference type="InterPro" id="IPR003687">
    <property type="entry name" value="PSII_PsbK"/>
</dbReference>
<dbReference type="InterPro" id="IPR037270">
    <property type="entry name" value="PSII_PsbK_sf"/>
</dbReference>
<dbReference type="NCBIfam" id="NF002715">
    <property type="entry name" value="PRK02553.1"/>
    <property type="match status" value="1"/>
</dbReference>
<dbReference type="PANTHER" id="PTHR35325">
    <property type="match status" value="1"/>
</dbReference>
<dbReference type="PANTHER" id="PTHR35325:SF1">
    <property type="entry name" value="PHOTOSYSTEM II REACTION CENTER PROTEIN K"/>
    <property type="match status" value="1"/>
</dbReference>
<dbReference type="Pfam" id="PF02533">
    <property type="entry name" value="PsbK"/>
    <property type="match status" value="1"/>
</dbReference>
<dbReference type="SUPFAM" id="SSF161037">
    <property type="entry name" value="Photosystem II reaction center protein K, PsbK"/>
    <property type="match status" value="1"/>
</dbReference>
<protein>
    <recommendedName>
        <fullName evidence="1">Photosystem II reaction center protein K</fullName>
        <shortName evidence="1">PSII-K</shortName>
    </recommendedName>
</protein>
<geneLocation type="chloroplast"/>
<comment type="function">
    <text evidence="1">One of the components of the core complex of photosystem II (PSII). PSII is a light-driven water:plastoquinone oxidoreductase that uses light energy to abstract electrons from H(2)O, generating O(2) and a proton gradient subsequently used for ATP formation. It consists of a core antenna complex that captures photons, and an electron transfer chain that converts photonic excitation into a charge separation.</text>
</comment>
<comment type="subunit">
    <text evidence="1">PSII is composed of 1 copy each of membrane proteins PsbA, PsbB, PsbC, PsbD, PsbE, PsbF, PsbH, PsbI, PsbJ, PsbK, PsbL, PsbM, PsbT, PsbX, PsbY, PsbZ, Psb30/Ycf12, at least 3 peripheral proteins of the oxygen-evolving complex and a large number of cofactors. It forms dimeric complexes.</text>
</comment>
<comment type="subcellular location">
    <subcellularLocation>
        <location evidence="1">Plastid</location>
        <location evidence="1">Chloroplast thylakoid membrane</location>
        <topology evidence="1">Single-pass membrane protein</topology>
    </subcellularLocation>
</comment>
<comment type="similarity">
    <text evidence="1">Belongs to the PsbK family.</text>
</comment>
<keyword id="KW-0150">Chloroplast</keyword>
<keyword id="KW-0472">Membrane</keyword>
<keyword id="KW-0602">Photosynthesis</keyword>
<keyword id="KW-0604">Photosystem II</keyword>
<keyword id="KW-0934">Plastid</keyword>
<keyword id="KW-0674">Reaction center</keyword>
<keyword id="KW-0793">Thylakoid</keyword>
<keyword id="KW-0812">Transmembrane</keyword>
<keyword id="KW-1133">Transmembrane helix</keyword>
<reference key="1">
    <citation type="journal article" date="2003" name="Plant Syst. Evol.">
        <title>The chloroplast genome of the 'basal' angiosperm Calycanthus fertilis -- structural and phylogenetic analyses.</title>
        <authorList>
            <person name="Goremykin V."/>
            <person name="Hirsch-Ernst K.I."/>
            <person name="Woelfl S."/>
            <person name="Hellwig F.H."/>
        </authorList>
    </citation>
    <scope>NUCLEOTIDE SEQUENCE [LARGE SCALE GENOMIC DNA]</scope>
</reference>
<sequence>MLNIFSLICLNSALHSSSFFFAKLPEAYAFFNPIVDVMPVIPVLFFLLALVWQAAVSFR</sequence>
<gene>
    <name evidence="1" type="primary">psbK</name>
</gene>
<feature type="propeptide" id="PRO_0000432459" evidence="1">
    <location>
        <begin position="1"/>
        <end position="22"/>
    </location>
</feature>
<feature type="chain" id="PRO_0000029442" description="Photosystem II reaction center protein K" evidence="1">
    <location>
        <begin position="23"/>
        <end position="59"/>
    </location>
</feature>
<feature type="transmembrane region" description="Helical" evidence="1">
    <location>
        <begin position="38"/>
        <end position="58"/>
    </location>
</feature>
<proteinExistence type="inferred from homology"/>
<accession>Q7YJY5</accession>
<organism>
    <name type="scientific">Calycanthus floridus var. glaucus</name>
    <name type="common">Eastern sweetshrub</name>
    <name type="synonym">Calycanthus fertilis var. ferax</name>
    <dbReference type="NCBI Taxonomy" id="212734"/>
    <lineage>
        <taxon>Eukaryota</taxon>
        <taxon>Viridiplantae</taxon>
        <taxon>Streptophyta</taxon>
        <taxon>Embryophyta</taxon>
        <taxon>Tracheophyta</taxon>
        <taxon>Spermatophyta</taxon>
        <taxon>Magnoliopsida</taxon>
        <taxon>Magnoliidae</taxon>
        <taxon>Laurales</taxon>
        <taxon>Calycanthaceae</taxon>
        <taxon>Calycanthus</taxon>
    </lineage>
</organism>
<evidence type="ECO:0000255" key="1">
    <source>
        <dbReference type="HAMAP-Rule" id="MF_00441"/>
    </source>
</evidence>